<reference key="1">
    <citation type="journal article" date="1997" name="Nature">
        <title>Genomic sequence of a Lyme disease spirochaete, Borrelia burgdorferi.</title>
        <authorList>
            <person name="Fraser C.M."/>
            <person name="Casjens S."/>
            <person name="Huang W.M."/>
            <person name="Sutton G.G."/>
            <person name="Clayton R.A."/>
            <person name="Lathigra R."/>
            <person name="White O."/>
            <person name="Ketchum K.A."/>
            <person name="Dodson R.J."/>
            <person name="Hickey E.K."/>
            <person name="Gwinn M.L."/>
            <person name="Dougherty B.A."/>
            <person name="Tomb J.-F."/>
            <person name="Fleischmann R.D."/>
            <person name="Richardson D.L."/>
            <person name="Peterson J.D."/>
            <person name="Kerlavage A.R."/>
            <person name="Quackenbush J."/>
            <person name="Salzberg S.L."/>
            <person name="Hanson M."/>
            <person name="van Vugt R."/>
            <person name="Palmer N."/>
            <person name="Adams M.D."/>
            <person name="Gocayne J.D."/>
            <person name="Weidman J.F."/>
            <person name="Utterback T.R."/>
            <person name="Watthey L."/>
            <person name="McDonald L.A."/>
            <person name="Artiach P."/>
            <person name="Bowman C."/>
            <person name="Garland S.A."/>
            <person name="Fujii C."/>
            <person name="Cotton M.D."/>
            <person name="Horst K."/>
            <person name="Roberts K.M."/>
            <person name="Hatch B."/>
            <person name="Smith H.O."/>
            <person name="Venter J.C."/>
        </authorList>
    </citation>
    <scope>NUCLEOTIDE SEQUENCE [LARGE SCALE GENOMIC DNA]</scope>
    <source>
        <strain>ATCC 35210 / DSM 4680 / CIP 102532 / B31</strain>
    </source>
</reference>
<feature type="chain" id="PRO_0000155164" description="Phosphate-specific transport system accessory protein PhoU homolog">
    <location>
        <begin position="1"/>
        <end position="223"/>
    </location>
</feature>
<organism>
    <name type="scientific">Borreliella burgdorferi (strain ATCC 35210 / DSM 4680 / CIP 102532 / B31)</name>
    <name type="common">Borrelia burgdorferi</name>
    <dbReference type="NCBI Taxonomy" id="224326"/>
    <lineage>
        <taxon>Bacteria</taxon>
        <taxon>Pseudomonadati</taxon>
        <taxon>Spirochaetota</taxon>
        <taxon>Spirochaetia</taxon>
        <taxon>Spirochaetales</taxon>
        <taxon>Borreliaceae</taxon>
        <taxon>Borreliella</taxon>
    </lineage>
</organism>
<accession>O51071</accession>
<keyword id="KW-0963">Cytoplasm</keyword>
<keyword id="KW-0592">Phosphate transport</keyword>
<keyword id="KW-1185">Reference proteome</keyword>
<keyword id="KW-0813">Transport</keyword>
<protein>
    <recommendedName>
        <fullName>Phosphate-specific transport system accessory protein PhoU homolog</fullName>
        <shortName>Pst system accessory protein PhoU homolog</shortName>
    </recommendedName>
</protein>
<gene>
    <name type="primary">phoU</name>
    <name type="ordered locus">BB_0042</name>
</gene>
<comment type="function">
    <text evidence="1">Plays a role in the regulation of phosphate uptake.</text>
</comment>
<comment type="subunit">
    <text evidence="1">Homodimer.</text>
</comment>
<comment type="subcellular location">
    <subcellularLocation>
        <location evidence="1">Cytoplasm</location>
    </subcellularLocation>
</comment>
<comment type="similarity">
    <text evidence="2">Belongs to the PhoU family.</text>
</comment>
<sequence length="223" mass="25980">MIRRKLTKQLEIIKDYLWDMKECVLKIIDDSLIALESKDKNLAKKIINEDEKIIDDYQYDIEDLCGRIIATEHPVATELREILAIIKIISSLERIADHATKIVKVVLLLESDLDDFDFLNLYFKPLREMADTAKEMLSDIFDAYFDGDFTKILKIVKYDNIIDKLFSKQKSIVIDAMKKNPENLDYLLNILFLNSFLERVGDHVATIGELLYFIRIGEKVNLT</sequence>
<proteinExistence type="inferred from homology"/>
<name>PHOU_BORBU</name>
<evidence type="ECO:0000250" key="1"/>
<evidence type="ECO:0000305" key="2"/>
<dbReference type="EMBL" id="AE000783">
    <property type="protein sequence ID" value="AAC66437.1"/>
    <property type="molecule type" value="Genomic_DNA"/>
</dbReference>
<dbReference type="PIR" id="B70105">
    <property type="entry name" value="B70105"/>
</dbReference>
<dbReference type="RefSeq" id="NP_212176.1">
    <property type="nucleotide sequence ID" value="NC_001318.1"/>
</dbReference>
<dbReference type="RefSeq" id="WP_002556647.1">
    <property type="nucleotide sequence ID" value="NC_001318.1"/>
</dbReference>
<dbReference type="SMR" id="O51071"/>
<dbReference type="STRING" id="224326.BB_0042"/>
<dbReference type="PaxDb" id="224326-BB_0042"/>
<dbReference type="EnsemblBacteria" id="AAC66437">
    <property type="protein sequence ID" value="AAC66437"/>
    <property type="gene ID" value="BB_0042"/>
</dbReference>
<dbReference type="GeneID" id="56568174"/>
<dbReference type="KEGG" id="bbu:BB_0042"/>
<dbReference type="PATRIC" id="fig|224326.49.peg.440"/>
<dbReference type="HOGENOM" id="CLU_078518_2_0_12"/>
<dbReference type="OrthoDB" id="9814256at2"/>
<dbReference type="Proteomes" id="UP000001807">
    <property type="component" value="Chromosome"/>
</dbReference>
<dbReference type="GO" id="GO:0005737">
    <property type="term" value="C:cytoplasm"/>
    <property type="evidence" value="ECO:0000250"/>
    <property type="project" value="UniProtKB"/>
</dbReference>
<dbReference type="GO" id="GO:0042803">
    <property type="term" value="F:protein homodimerization activity"/>
    <property type="evidence" value="ECO:0000250"/>
    <property type="project" value="UniProtKB"/>
</dbReference>
<dbReference type="GO" id="GO:0030643">
    <property type="term" value="P:intracellular phosphate ion homeostasis"/>
    <property type="evidence" value="ECO:0007669"/>
    <property type="project" value="InterPro"/>
</dbReference>
<dbReference type="GO" id="GO:0045936">
    <property type="term" value="P:negative regulation of phosphate metabolic process"/>
    <property type="evidence" value="ECO:0000250"/>
    <property type="project" value="UniProtKB"/>
</dbReference>
<dbReference type="GO" id="GO:2000186">
    <property type="term" value="P:negative regulation of phosphate transmembrane transport"/>
    <property type="evidence" value="ECO:0000250"/>
    <property type="project" value="UniProtKB"/>
</dbReference>
<dbReference type="GO" id="GO:0006817">
    <property type="term" value="P:phosphate ion transport"/>
    <property type="evidence" value="ECO:0007669"/>
    <property type="project" value="UniProtKB-KW"/>
</dbReference>
<dbReference type="FunFam" id="1.20.58.220:FF:000004">
    <property type="entry name" value="Phosphate-specific transport system accessory protein PhoU"/>
    <property type="match status" value="1"/>
</dbReference>
<dbReference type="Gene3D" id="1.20.58.220">
    <property type="entry name" value="Phosphate transport system protein phou homolog 2, domain 2"/>
    <property type="match status" value="2"/>
</dbReference>
<dbReference type="InterPro" id="IPR028366">
    <property type="entry name" value="P_transport_PhoU"/>
</dbReference>
<dbReference type="InterPro" id="IPR038078">
    <property type="entry name" value="PhoU-like_sf"/>
</dbReference>
<dbReference type="InterPro" id="IPR026022">
    <property type="entry name" value="PhoU_dom"/>
</dbReference>
<dbReference type="NCBIfam" id="TIGR02135">
    <property type="entry name" value="phoU_full"/>
    <property type="match status" value="1"/>
</dbReference>
<dbReference type="PANTHER" id="PTHR42930">
    <property type="entry name" value="PHOSPHATE-SPECIFIC TRANSPORT SYSTEM ACCESSORY PROTEIN PHOU"/>
    <property type="match status" value="1"/>
</dbReference>
<dbReference type="PANTHER" id="PTHR42930:SF3">
    <property type="entry name" value="PHOSPHATE-SPECIFIC TRANSPORT SYSTEM ACCESSORY PROTEIN PHOU"/>
    <property type="match status" value="1"/>
</dbReference>
<dbReference type="Pfam" id="PF01895">
    <property type="entry name" value="PhoU"/>
    <property type="match status" value="2"/>
</dbReference>
<dbReference type="PIRSF" id="PIRSF003107">
    <property type="entry name" value="PhoU"/>
    <property type="match status" value="1"/>
</dbReference>
<dbReference type="SUPFAM" id="SSF109755">
    <property type="entry name" value="PhoU-like"/>
    <property type="match status" value="1"/>
</dbReference>